<name>RSSA_RABIT</name>
<evidence type="ECO:0000250" key="1">
    <source>
        <dbReference type="UniProtKB" id="P08865"/>
    </source>
</evidence>
<evidence type="ECO:0000250" key="2">
    <source>
        <dbReference type="UniProtKB" id="P14206"/>
    </source>
</evidence>
<evidence type="ECO:0000255" key="3">
    <source>
        <dbReference type="HAMAP-Rule" id="MF_03016"/>
    </source>
</evidence>
<evidence type="ECO:0000256" key="4">
    <source>
        <dbReference type="SAM" id="MobiDB-lite"/>
    </source>
</evidence>
<evidence type="ECO:0000269" key="5">
    <source>
    </source>
</evidence>
<evidence type="ECO:0000269" key="6">
    <source>
    </source>
</evidence>
<evidence type="ECO:0000269" key="7">
    <source>
    </source>
</evidence>
<evidence type="ECO:0000269" key="8">
    <source>
    </source>
</evidence>
<evidence type="ECO:0000269" key="9">
    <source>
    </source>
</evidence>
<evidence type="ECO:0000269" key="10">
    <source>
    </source>
</evidence>
<evidence type="ECO:0000269" key="11">
    <source>
    </source>
</evidence>
<evidence type="ECO:0000269" key="12">
    <source>
    </source>
</evidence>
<evidence type="ECO:0000269" key="13">
    <source>
    </source>
</evidence>
<evidence type="ECO:0000269" key="14">
    <source>
    </source>
</evidence>
<evidence type="ECO:0000305" key="15"/>
<evidence type="ECO:0007744" key="16">
    <source>
        <dbReference type="PDB" id="4D5L"/>
    </source>
</evidence>
<evidence type="ECO:0007744" key="17">
    <source>
        <dbReference type="PDB" id="4D61"/>
    </source>
</evidence>
<evidence type="ECO:0007744" key="18">
    <source>
        <dbReference type="PDB" id="4KZX"/>
    </source>
</evidence>
<evidence type="ECO:0007744" key="19">
    <source>
        <dbReference type="PDB" id="4KZY"/>
    </source>
</evidence>
<evidence type="ECO:0007744" key="20">
    <source>
        <dbReference type="PDB" id="6D90"/>
    </source>
</evidence>
<evidence type="ECO:0007744" key="21">
    <source>
        <dbReference type="PDB" id="6P4G"/>
    </source>
</evidence>
<evidence type="ECO:0007744" key="22">
    <source>
        <dbReference type="PDB" id="6P4H"/>
    </source>
</evidence>
<evidence type="ECO:0007744" key="23">
    <source>
        <dbReference type="PDB" id="6W2S"/>
    </source>
</evidence>
<evidence type="ECO:0007744" key="24">
    <source>
        <dbReference type="PDB" id="6W2T"/>
    </source>
</evidence>
<evidence type="ECO:0007744" key="25">
    <source>
        <dbReference type="PDB" id="6ZVK"/>
    </source>
</evidence>
<evidence type="ECO:0007744" key="26">
    <source>
        <dbReference type="PDB" id="7A01"/>
    </source>
</evidence>
<evidence type="ECO:0007744" key="27">
    <source>
        <dbReference type="PDB" id="7OYD"/>
    </source>
</evidence>
<evidence type="ECO:0007744" key="28">
    <source>
        <dbReference type="PDB" id="7SYI"/>
    </source>
</evidence>
<evidence type="ECO:0007744" key="29">
    <source>
        <dbReference type="PDB" id="7SYJ"/>
    </source>
</evidence>
<evidence type="ECO:0007744" key="30">
    <source>
        <dbReference type="PDB" id="7UCJ"/>
    </source>
</evidence>
<evidence type="ECO:0007744" key="31">
    <source>
        <dbReference type="PDB" id="7UCK"/>
    </source>
</evidence>
<evidence type="ECO:0007744" key="32">
    <source>
        <dbReference type="PDB" id="7ZJW"/>
    </source>
</evidence>
<evidence type="ECO:0007744" key="33">
    <source>
        <dbReference type="PDB" id="7ZJX"/>
    </source>
</evidence>
<evidence type="ECO:0007829" key="34">
    <source>
        <dbReference type="PDB" id="6YAL"/>
    </source>
</evidence>
<evidence type="ECO:0007829" key="35">
    <source>
        <dbReference type="PDB" id="6YAN"/>
    </source>
</evidence>
<evidence type="ECO:0007829" key="36">
    <source>
        <dbReference type="PDB" id="7JQB"/>
    </source>
</evidence>
<evidence type="ECO:0007829" key="37">
    <source>
        <dbReference type="PDB" id="7JQC"/>
    </source>
</evidence>
<dbReference type="EMBL" id="AAGW02056153">
    <property type="status" value="NOT_ANNOTATED_CDS"/>
    <property type="molecule type" value="Genomic_DNA"/>
</dbReference>
<dbReference type="EMBL" id="AAGW02056154">
    <property type="status" value="NOT_ANNOTATED_CDS"/>
    <property type="molecule type" value="Genomic_DNA"/>
</dbReference>
<dbReference type="RefSeq" id="XP_002712810.1">
    <property type="nucleotide sequence ID" value="XM_002712764.3"/>
</dbReference>
<dbReference type="RefSeq" id="XP_002713144.1">
    <property type="nucleotide sequence ID" value="XM_002713098.5"/>
</dbReference>
<dbReference type="RefSeq" id="XP_069907104.1">
    <property type="nucleotide sequence ID" value="XM_070051003.1"/>
</dbReference>
<dbReference type="PDB" id="4D5L">
    <property type="method" value="EM"/>
    <property type="resolution" value="9.00 A"/>
    <property type="chains" value="A=1-295"/>
</dbReference>
<dbReference type="PDB" id="4D61">
    <property type="method" value="EM"/>
    <property type="resolution" value="9.00 A"/>
    <property type="chains" value="A=1-295"/>
</dbReference>
<dbReference type="PDB" id="4KZX">
    <property type="method" value="X-ray"/>
    <property type="resolution" value="7.81 A"/>
    <property type="chains" value="A=14-295"/>
</dbReference>
<dbReference type="PDB" id="4KZY">
    <property type="method" value="X-ray"/>
    <property type="resolution" value="7.01 A"/>
    <property type="chains" value="A=14-295"/>
</dbReference>
<dbReference type="PDB" id="4KZZ">
    <property type="method" value="X-ray"/>
    <property type="resolution" value="7.03 A"/>
    <property type="chains" value="A=14-295"/>
</dbReference>
<dbReference type="PDB" id="5K0Y">
    <property type="method" value="EM"/>
    <property type="resolution" value="5.80 A"/>
    <property type="chains" value="f=2-209"/>
</dbReference>
<dbReference type="PDB" id="6D90">
    <property type="method" value="EM"/>
    <property type="resolution" value="3.20 A"/>
    <property type="chains" value="BB=1-295"/>
</dbReference>
<dbReference type="PDB" id="6P4G">
    <property type="method" value="EM"/>
    <property type="resolution" value="3.10 A"/>
    <property type="chains" value="B=1-295"/>
</dbReference>
<dbReference type="PDB" id="6P4H">
    <property type="method" value="EM"/>
    <property type="resolution" value="3.20 A"/>
    <property type="chains" value="B=1-295"/>
</dbReference>
<dbReference type="PDB" id="6W2S">
    <property type="method" value="EM"/>
    <property type="resolution" value="3.00 A"/>
    <property type="chains" value="B=1-295"/>
</dbReference>
<dbReference type="PDB" id="6W2T">
    <property type="method" value="EM"/>
    <property type="resolution" value="3.36 A"/>
    <property type="chains" value="B=1-295"/>
</dbReference>
<dbReference type="PDB" id="6YAL">
    <property type="method" value="EM"/>
    <property type="resolution" value="3.00 A"/>
    <property type="chains" value="C=1-209"/>
</dbReference>
<dbReference type="PDB" id="6YAM">
    <property type="method" value="EM"/>
    <property type="resolution" value="3.60 A"/>
    <property type="chains" value="C=2-209"/>
</dbReference>
<dbReference type="PDB" id="6YAN">
    <property type="method" value="EM"/>
    <property type="resolution" value="3.48 A"/>
    <property type="chains" value="C=2-209"/>
</dbReference>
<dbReference type="PDB" id="6ZVK">
    <property type="method" value="EM"/>
    <property type="resolution" value="3.49 A"/>
    <property type="chains" value="U3=2-209"/>
</dbReference>
<dbReference type="PDB" id="7A01">
    <property type="method" value="EM"/>
    <property type="resolution" value="3.60 A"/>
    <property type="chains" value="U3=2-209"/>
</dbReference>
<dbReference type="PDB" id="7JQB">
    <property type="method" value="EM"/>
    <property type="resolution" value="2.70 A"/>
    <property type="chains" value="B=1-295"/>
</dbReference>
<dbReference type="PDB" id="7JQC">
    <property type="method" value="EM"/>
    <property type="resolution" value="3.30 A"/>
    <property type="chains" value="B=1-295"/>
</dbReference>
<dbReference type="PDB" id="7MDZ">
    <property type="method" value="EM"/>
    <property type="resolution" value="3.20 A"/>
    <property type="chains" value="AA=1-295"/>
</dbReference>
<dbReference type="PDB" id="7NWG">
    <property type="method" value="EM"/>
    <property type="resolution" value="3.80 A"/>
    <property type="chains" value="B2=1-295"/>
</dbReference>
<dbReference type="PDB" id="7NWI">
    <property type="method" value="EM"/>
    <property type="resolution" value="3.13 A"/>
    <property type="chains" value="AA=1-295"/>
</dbReference>
<dbReference type="PDB" id="7O7Y">
    <property type="method" value="EM"/>
    <property type="resolution" value="2.20 A"/>
    <property type="chains" value="AZ=1-295"/>
</dbReference>
<dbReference type="PDB" id="7O7Z">
    <property type="method" value="EM"/>
    <property type="resolution" value="2.40 A"/>
    <property type="chains" value="AZ=1-295"/>
</dbReference>
<dbReference type="PDB" id="7O80">
    <property type="method" value="EM"/>
    <property type="resolution" value="2.90 A"/>
    <property type="chains" value="AZ=1-295"/>
</dbReference>
<dbReference type="PDB" id="7O81">
    <property type="method" value="EM"/>
    <property type="resolution" value="3.10 A"/>
    <property type="chains" value="AZ=1-295"/>
</dbReference>
<dbReference type="PDB" id="7OYD">
    <property type="method" value="EM"/>
    <property type="resolution" value="2.30 A"/>
    <property type="chains" value="AA=1-295"/>
</dbReference>
<dbReference type="PDB" id="7SYG">
    <property type="method" value="EM"/>
    <property type="resolution" value="4.30 A"/>
    <property type="chains" value="B=1-295"/>
</dbReference>
<dbReference type="PDB" id="7SYH">
    <property type="method" value="EM"/>
    <property type="resolution" value="4.60 A"/>
    <property type="chains" value="B=1-295"/>
</dbReference>
<dbReference type="PDB" id="7SYI">
    <property type="method" value="EM"/>
    <property type="resolution" value="4.50 A"/>
    <property type="chains" value="B=1-295"/>
</dbReference>
<dbReference type="PDB" id="7SYJ">
    <property type="method" value="EM"/>
    <property type="resolution" value="4.80 A"/>
    <property type="chains" value="B=1-295"/>
</dbReference>
<dbReference type="PDB" id="7SYK">
    <property type="method" value="EM"/>
    <property type="resolution" value="4.20 A"/>
    <property type="chains" value="B=1-295"/>
</dbReference>
<dbReference type="PDB" id="7SYL">
    <property type="method" value="EM"/>
    <property type="resolution" value="4.50 A"/>
    <property type="chains" value="B=1-295"/>
</dbReference>
<dbReference type="PDB" id="7SYM">
    <property type="method" value="EM"/>
    <property type="resolution" value="4.80 A"/>
    <property type="chains" value="B=1-295"/>
</dbReference>
<dbReference type="PDB" id="7SYN">
    <property type="method" value="EM"/>
    <property type="resolution" value="4.00 A"/>
    <property type="chains" value="B=1-295"/>
</dbReference>
<dbReference type="PDB" id="7SYO">
    <property type="method" value="EM"/>
    <property type="resolution" value="4.60 A"/>
    <property type="chains" value="B=1-295"/>
</dbReference>
<dbReference type="PDB" id="7SYP">
    <property type="method" value="EM"/>
    <property type="resolution" value="4.00 A"/>
    <property type="chains" value="B=1-295"/>
</dbReference>
<dbReference type="PDB" id="7SYQ">
    <property type="method" value="EM"/>
    <property type="resolution" value="3.80 A"/>
    <property type="chains" value="B=1-295"/>
</dbReference>
<dbReference type="PDB" id="7SYR">
    <property type="method" value="EM"/>
    <property type="resolution" value="3.60 A"/>
    <property type="chains" value="B=1-295"/>
</dbReference>
<dbReference type="PDB" id="7SYS">
    <property type="method" value="EM"/>
    <property type="resolution" value="3.50 A"/>
    <property type="chains" value="B=1-295"/>
</dbReference>
<dbReference type="PDB" id="7SYT">
    <property type="method" value="EM"/>
    <property type="resolution" value="4.40 A"/>
    <property type="chains" value="B=1-295"/>
</dbReference>
<dbReference type="PDB" id="7SYU">
    <property type="method" value="EM"/>
    <property type="resolution" value="4.60 A"/>
    <property type="chains" value="B=1-295"/>
</dbReference>
<dbReference type="PDB" id="7SYV">
    <property type="method" value="EM"/>
    <property type="resolution" value="3.90 A"/>
    <property type="chains" value="B=1-295"/>
</dbReference>
<dbReference type="PDB" id="7SYW">
    <property type="method" value="EM"/>
    <property type="resolution" value="3.70 A"/>
    <property type="chains" value="B=1-295"/>
</dbReference>
<dbReference type="PDB" id="7SYX">
    <property type="method" value="EM"/>
    <property type="resolution" value="3.70 A"/>
    <property type="chains" value="B=1-295"/>
</dbReference>
<dbReference type="PDB" id="7TOQ">
    <property type="method" value="EM"/>
    <property type="resolution" value="3.10 A"/>
    <property type="chains" value="AS00=2-218"/>
</dbReference>
<dbReference type="PDB" id="7TOR">
    <property type="method" value="EM"/>
    <property type="resolution" value="2.90 A"/>
    <property type="chains" value="AS00=2-218"/>
</dbReference>
<dbReference type="PDB" id="7UCJ">
    <property type="method" value="EM"/>
    <property type="resolution" value="3.10 A"/>
    <property type="chains" value="AA=2-218"/>
</dbReference>
<dbReference type="PDB" id="7UCK">
    <property type="method" value="EM"/>
    <property type="resolution" value="2.80 A"/>
    <property type="chains" value="AA=2-218"/>
</dbReference>
<dbReference type="PDB" id="7ZJW">
    <property type="method" value="EM"/>
    <property type="resolution" value="2.80 A"/>
    <property type="chains" value="SL=1-295"/>
</dbReference>
<dbReference type="PDB" id="7ZJX">
    <property type="method" value="EM"/>
    <property type="resolution" value="3.10 A"/>
    <property type="chains" value="SL=1-295"/>
</dbReference>
<dbReference type="PDB" id="8BHF">
    <property type="method" value="EM"/>
    <property type="resolution" value="3.10 A"/>
    <property type="chains" value="B3=2-218"/>
</dbReference>
<dbReference type="PDB" id="8BTK">
    <property type="method" value="EM"/>
    <property type="resolution" value="3.50 A"/>
    <property type="chains" value="AZ=1-295"/>
</dbReference>
<dbReference type="PDB" id="8P03">
    <property type="method" value="EM"/>
    <property type="resolution" value="3.04 A"/>
    <property type="chains" value="C=3-209"/>
</dbReference>
<dbReference type="PDB" id="8P09">
    <property type="method" value="EM"/>
    <property type="resolution" value="3.30 A"/>
    <property type="chains" value="C=3-209"/>
</dbReference>
<dbReference type="PDB" id="8P2K">
    <property type="method" value="EM"/>
    <property type="resolution" value="2.90 A"/>
    <property type="chains" value="AZ=1-295"/>
</dbReference>
<dbReference type="PDB" id="8SCB">
    <property type="method" value="EM"/>
    <property type="resolution" value="2.50 A"/>
    <property type="chains" value="AA=1-295"/>
</dbReference>
<dbReference type="PDB" id="8VFT">
    <property type="method" value="EM"/>
    <property type="resolution" value="3.30 A"/>
    <property type="chains" value="AA=1-295"/>
</dbReference>
<dbReference type="PDB" id="9C8K">
    <property type="method" value="EM"/>
    <property type="resolution" value="3.10 A"/>
    <property type="chains" value="A=1-295"/>
</dbReference>
<dbReference type="PDB" id="9F1B">
    <property type="method" value="EM"/>
    <property type="resolution" value="3.01 A"/>
    <property type="chains" value="AZ=1-295"/>
</dbReference>
<dbReference type="PDB" id="9F1C">
    <property type="method" value="EM"/>
    <property type="resolution" value="3.78 A"/>
    <property type="chains" value="AZ=1-295"/>
</dbReference>
<dbReference type="PDB" id="9F1D">
    <property type="method" value="EM"/>
    <property type="resolution" value="3.26 A"/>
    <property type="chains" value="AZ=1-295"/>
</dbReference>
<dbReference type="PDBsum" id="4D5L"/>
<dbReference type="PDBsum" id="4D61"/>
<dbReference type="PDBsum" id="4KZX"/>
<dbReference type="PDBsum" id="4KZY"/>
<dbReference type="PDBsum" id="4KZZ"/>
<dbReference type="PDBsum" id="5K0Y"/>
<dbReference type="PDBsum" id="6D90"/>
<dbReference type="PDBsum" id="6P4G"/>
<dbReference type="PDBsum" id="6P4H"/>
<dbReference type="PDBsum" id="6W2S"/>
<dbReference type="PDBsum" id="6W2T"/>
<dbReference type="PDBsum" id="6YAL"/>
<dbReference type="PDBsum" id="6YAM"/>
<dbReference type="PDBsum" id="6YAN"/>
<dbReference type="PDBsum" id="6ZVK"/>
<dbReference type="PDBsum" id="7A01"/>
<dbReference type="PDBsum" id="7JQB"/>
<dbReference type="PDBsum" id="7JQC"/>
<dbReference type="PDBsum" id="7MDZ"/>
<dbReference type="PDBsum" id="7NWG"/>
<dbReference type="PDBsum" id="7NWI"/>
<dbReference type="PDBsum" id="7O7Y"/>
<dbReference type="PDBsum" id="7O7Z"/>
<dbReference type="PDBsum" id="7O80"/>
<dbReference type="PDBsum" id="7O81"/>
<dbReference type="PDBsum" id="7OYD"/>
<dbReference type="PDBsum" id="7SYG"/>
<dbReference type="PDBsum" id="7SYH"/>
<dbReference type="PDBsum" id="7SYI"/>
<dbReference type="PDBsum" id="7SYJ"/>
<dbReference type="PDBsum" id="7SYK"/>
<dbReference type="PDBsum" id="7SYL"/>
<dbReference type="PDBsum" id="7SYM"/>
<dbReference type="PDBsum" id="7SYN"/>
<dbReference type="PDBsum" id="7SYO"/>
<dbReference type="PDBsum" id="7SYP"/>
<dbReference type="PDBsum" id="7SYQ"/>
<dbReference type="PDBsum" id="7SYR"/>
<dbReference type="PDBsum" id="7SYS"/>
<dbReference type="PDBsum" id="7SYT"/>
<dbReference type="PDBsum" id="7SYU"/>
<dbReference type="PDBsum" id="7SYV"/>
<dbReference type="PDBsum" id="7SYW"/>
<dbReference type="PDBsum" id="7SYX"/>
<dbReference type="PDBsum" id="7TOQ"/>
<dbReference type="PDBsum" id="7TOR"/>
<dbReference type="PDBsum" id="7UCJ"/>
<dbReference type="PDBsum" id="7UCK"/>
<dbReference type="PDBsum" id="7ZJW"/>
<dbReference type="PDBsum" id="7ZJX"/>
<dbReference type="PDBsum" id="8BHF"/>
<dbReference type="PDBsum" id="8BTK"/>
<dbReference type="PDBsum" id="8P03"/>
<dbReference type="PDBsum" id="8P09"/>
<dbReference type="PDBsum" id="8P2K"/>
<dbReference type="PDBsum" id="8SCB"/>
<dbReference type="PDBsum" id="8VFT"/>
<dbReference type="PDBsum" id="9C8K"/>
<dbReference type="PDBsum" id="9F1B"/>
<dbReference type="PDBsum" id="9F1C"/>
<dbReference type="PDBsum" id="9F1D"/>
<dbReference type="EMDB" id="EMD-0099"/>
<dbReference type="EMDB" id="EMD-0100"/>
<dbReference type="EMDB" id="EMD-0192"/>
<dbReference type="EMDB" id="EMD-0194"/>
<dbReference type="EMDB" id="EMD-0195"/>
<dbReference type="EMDB" id="EMD-0197"/>
<dbReference type="EMDB" id="EMD-10181"/>
<dbReference type="EMDB" id="EMD-10760"/>
<dbReference type="EMDB" id="EMD-10761"/>
<dbReference type="EMDB" id="EMD-10762"/>
<dbReference type="EMDB" id="EMD-12631"/>
<dbReference type="EMDB" id="EMD-12632"/>
<dbReference type="EMDB" id="EMD-12633"/>
<dbReference type="EMDB" id="EMD-12756"/>
<dbReference type="EMDB" id="EMD-12757"/>
<dbReference type="EMDB" id="EMD-12758"/>
<dbReference type="EMDB" id="EMD-12759"/>
<dbReference type="EMDB" id="EMD-13114"/>
<dbReference type="EMDB" id="EMD-14751"/>
<dbReference type="EMDB" id="EMD-14752"/>
<dbReference type="EMDB" id="EMD-16232"/>
<dbReference type="EMDB" id="EMD-17329"/>
<dbReference type="EMDB" id="EMD-17330"/>
<dbReference type="EMDB" id="EMD-17367"/>
<dbReference type="EMDB" id="EMD-20248"/>
<dbReference type="EMDB" id="EMD-20249"/>
<dbReference type="EMDB" id="EMD-20255"/>
<dbReference type="EMDB" id="EMD-20256"/>
<dbReference type="EMDB" id="EMD-20257"/>
<dbReference type="EMDB" id="EMD-20258"/>
<dbReference type="EMDB" id="EMD-21529"/>
<dbReference type="EMDB" id="EMD-21530"/>
<dbReference type="EMDB" id="EMD-22432"/>
<dbReference type="EMDB" id="EMD-22433"/>
<dbReference type="EMDB" id="EMD-23785"/>
<dbReference type="EMDB" id="EMD-25527"/>
<dbReference type="EMDB" id="EMD-25528"/>
<dbReference type="EMDB" id="EMD-25529"/>
<dbReference type="EMDB" id="EMD-25530"/>
<dbReference type="EMDB" id="EMD-25531"/>
<dbReference type="EMDB" id="EMD-25532"/>
<dbReference type="EMDB" id="EMD-25533"/>
<dbReference type="EMDB" id="EMD-25534"/>
<dbReference type="EMDB" id="EMD-25535"/>
<dbReference type="EMDB" id="EMD-25536"/>
<dbReference type="EMDB" id="EMD-25537"/>
<dbReference type="EMDB" id="EMD-25538"/>
<dbReference type="EMDB" id="EMD-25539"/>
<dbReference type="EMDB" id="EMD-25540"/>
<dbReference type="EMDB" id="EMD-25541"/>
<dbReference type="EMDB" id="EMD-25542"/>
<dbReference type="EMDB" id="EMD-25543"/>
<dbReference type="EMDB" id="EMD-25544"/>
<dbReference type="EMDB" id="EMD-40344"/>
<dbReference type="EMDB" id="EMD-4130"/>
<dbReference type="EMDB" id="EMD-4131"/>
<dbReference type="EMDB" id="EMD-4132"/>
<dbReference type="EMDB" id="EMD-4133"/>
<dbReference type="EMDB" id="EMD-4134"/>
<dbReference type="EMDB" id="EMD-4135"/>
<dbReference type="EMDB" id="EMD-4136"/>
<dbReference type="EMDB" id="EMD-4137"/>
<dbReference type="EMDB" id="EMD-43189"/>
<dbReference type="EMDB" id="EMD-45307"/>
<dbReference type="EMDB" id="EMD-4729"/>
<dbReference type="EMDB" id="EMD-4735"/>
<dbReference type="EMDB" id="EMD-4737"/>
<dbReference type="EMDB" id="EMD-4745"/>
<dbReference type="EMDB" id="EMD-50124"/>
<dbReference type="EMDB" id="EMD-50125"/>
<dbReference type="EMDB" id="EMD-50126"/>
<dbReference type="EMDB" id="EMD-7834"/>
<dbReference type="EMDB" id="EMD-7836"/>
<dbReference type="EMDB" id="EMD-8190"/>
<dbReference type="EMDB" id="EMD-9240"/>
<dbReference type="EMDB" id="EMD-9242"/>
<dbReference type="SMR" id="G1TLT8"/>
<dbReference type="FunCoup" id="G1TLT8">
    <property type="interactions" value="1301"/>
</dbReference>
<dbReference type="IntAct" id="G1TLT8">
    <property type="interactions" value="1"/>
</dbReference>
<dbReference type="STRING" id="9986.ENSOCUP00000017940"/>
<dbReference type="PaxDb" id="9986-ENSOCUP00000021460"/>
<dbReference type="Ensembl" id="ENSOCUT00000007017.3">
    <property type="protein sequence ID" value="ENSOCUP00000017940.2"/>
    <property type="gene ID" value="ENSOCUG00000007018.3"/>
</dbReference>
<dbReference type="GeneID" id="103344934"/>
<dbReference type="KEGG" id="ocu:100346276"/>
<dbReference type="KEGG" id="ocu:103344934"/>
<dbReference type="CTD" id="3921"/>
<dbReference type="eggNOG" id="KOG0830">
    <property type="taxonomic scope" value="Eukaryota"/>
</dbReference>
<dbReference type="GeneTree" id="ENSGT00950000183099"/>
<dbReference type="HOGENOM" id="CLU_058171_1_0_1"/>
<dbReference type="InParanoid" id="G1TLT8"/>
<dbReference type="OrthoDB" id="9593289at2759"/>
<dbReference type="TreeFam" id="TF300100"/>
<dbReference type="Proteomes" id="UP000001811">
    <property type="component" value="Chromosome 9"/>
</dbReference>
<dbReference type="Bgee" id="ENSOCUG00000022518">
    <property type="expression patterns" value="Expressed in blood and 5 other cell types or tissues"/>
</dbReference>
<dbReference type="GO" id="GO:0022627">
    <property type="term" value="C:cytosolic small ribosomal subunit"/>
    <property type="evidence" value="ECO:0007669"/>
    <property type="project" value="UniProtKB-UniRule"/>
</dbReference>
<dbReference type="GO" id="GO:0005634">
    <property type="term" value="C:nucleus"/>
    <property type="evidence" value="ECO:0007669"/>
    <property type="project" value="UniProtKB-SubCell"/>
</dbReference>
<dbReference type="GO" id="GO:0005886">
    <property type="term" value="C:plasma membrane"/>
    <property type="evidence" value="ECO:0007669"/>
    <property type="project" value="UniProtKB-SubCell"/>
</dbReference>
<dbReference type="GO" id="GO:0043236">
    <property type="term" value="F:laminin binding"/>
    <property type="evidence" value="ECO:0007669"/>
    <property type="project" value="UniProtKB-UniRule"/>
</dbReference>
<dbReference type="GO" id="GO:0005055">
    <property type="term" value="F:laminin receptor activity"/>
    <property type="evidence" value="ECO:0007669"/>
    <property type="project" value="UniProtKB-UniRule"/>
</dbReference>
<dbReference type="GO" id="GO:0003735">
    <property type="term" value="F:structural constituent of ribosome"/>
    <property type="evidence" value="ECO:0007669"/>
    <property type="project" value="UniProtKB-UniRule"/>
</dbReference>
<dbReference type="GO" id="GO:0001618">
    <property type="term" value="F:virus receptor activity"/>
    <property type="evidence" value="ECO:0007669"/>
    <property type="project" value="UniProtKB-KW"/>
</dbReference>
<dbReference type="GO" id="GO:0000028">
    <property type="term" value="P:ribosomal small subunit assembly"/>
    <property type="evidence" value="ECO:0007669"/>
    <property type="project" value="UniProtKB-UniRule"/>
</dbReference>
<dbReference type="GO" id="GO:0006412">
    <property type="term" value="P:translation"/>
    <property type="evidence" value="ECO:0007669"/>
    <property type="project" value="UniProtKB-UniRule"/>
</dbReference>
<dbReference type="CDD" id="cd01425">
    <property type="entry name" value="RPS2"/>
    <property type="match status" value="1"/>
</dbReference>
<dbReference type="FunFam" id="3.40.50.10490:FF:000012">
    <property type="entry name" value="40S ribosomal protein SA"/>
    <property type="match status" value="1"/>
</dbReference>
<dbReference type="Gene3D" id="3.40.50.10490">
    <property type="entry name" value="Glucose-6-phosphate isomerase like protein, domain 1"/>
    <property type="match status" value="1"/>
</dbReference>
<dbReference type="HAMAP" id="MF_03015">
    <property type="entry name" value="Ribosomal_S2_euk"/>
    <property type="match status" value="1"/>
</dbReference>
<dbReference type="HAMAP" id="MF_03016">
    <property type="entry name" value="Ribosomal_S2_laminin_receptor"/>
    <property type="match status" value="1"/>
</dbReference>
<dbReference type="InterPro" id="IPR001865">
    <property type="entry name" value="Ribosomal_uS2"/>
</dbReference>
<dbReference type="InterPro" id="IPR032281">
    <property type="entry name" value="Ribosomal_uS2_C"/>
</dbReference>
<dbReference type="InterPro" id="IPR018130">
    <property type="entry name" value="Ribosomal_uS2_CS"/>
</dbReference>
<dbReference type="InterPro" id="IPR027498">
    <property type="entry name" value="Ribosomal_uS2_euk"/>
</dbReference>
<dbReference type="InterPro" id="IPR005707">
    <property type="entry name" value="Ribosomal_uS2_euk/arc"/>
</dbReference>
<dbReference type="InterPro" id="IPR023591">
    <property type="entry name" value="Ribosomal_uS2_flav_dom_sf"/>
</dbReference>
<dbReference type="InterPro" id="IPR027504">
    <property type="entry name" value="Ribosomal_uS2_vert"/>
</dbReference>
<dbReference type="NCBIfam" id="TIGR01012">
    <property type="entry name" value="uS2_euk_arch"/>
    <property type="match status" value="1"/>
</dbReference>
<dbReference type="PANTHER" id="PTHR11489">
    <property type="entry name" value="40S RIBOSOMAL PROTEIN SA"/>
    <property type="match status" value="1"/>
</dbReference>
<dbReference type="Pfam" id="PF16122">
    <property type="entry name" value="40S_SA_C"/>
    <property type="match status" value="1"/>
</dbReference>
<dbReference type="Pfam" id="PF00318">
    <property type="entry name" value="Ribosomal_S2"/>
    <property type="match status" value="2"/>
</dbReference>
<dbReference type="PRINTS" id="PR00395">
    <property type="entry name" value="RIBOSOMALS2"/>
</dbReference>
<dbReference type="SUPFAM" id="SSF52313">
    <property type="entry name" value="Ribosomal protein S2"/>
    <property type="match status" value="1"/>
</dbReference>
<dbReference type="PROSITE" id="PS00962">
    <property type="entry name" value="RIBOSOMAL_S2_1"/>
    <property type="match status" value="1"/>
</dbReference>
<dbReference type="PROSITE" id="PS00963">
    <property type="entry name" value="RIBOSOMAL_S2_2"/>
    <property type="match status" value="1"/>
</dbReference>
<accession>G1TLT8</accession>
<accession>G1TWL4</accession>
<gene>
    <name evidence="3" type="primary">RPSA</name>
</gene>
<proteinExistence type="evidence at protein level"/>
<reference key="1">
    <citation type="journal article" date="2011" name="Nature">
        <title>A high-resolution map of human evolutionary constraint using 29 mammals.</title>
        <authorList>
            <person name="Lindblad-Toh K."/>
            <person name="Garber M."/>
            <person name="Zuk O."/>
            <person name="Lin M.F."/>
            <person name="Parker B.J."/>
            <person name="Washietl S."/>
            <person name="Kheradpour P."/>
            <person name="Ernst J."/>
            <person name="Jordan G."/>
            <person name="Mauceli E."/>
            <person name="Ward L.D."/>
            <person name="Lowe C.B."/>
            <person name="Holloway A.K."/>
            <person name="Clamp M."/>
            <person name="Gnerre S."/>
            <person name="Alfoldi J."/>
            <person name="Beal K."/>
            <person name="Chang J."/>
            <person name="Clawson H."/>
            <person name="Cuff J."/>
            <person name="Di Palma F."/>
            <person name="Fitzgerald S."/>
            <person name="Flicek P."/>
            <person name="Guttman M."/>
            <person name="Hubisz M.J."/>
            <person name="Jaffe D.B."/>
            <person name="Jungreis I."/>
            <person name="Kent W.J."/>
            <person name="Kostka D."/>
            <person name="Lara M."/>
            <person name="Martins A.L."/>
            <person name="Massingham T."/>
            <person name="Moltke I."/>
            <person name="Raney B.J."/>
            <person name="Rasmussen M.D."/>
            <person name="Robinson J."/>
            <person name="Stark A."/>
            <person name="Vilella A.J."/>
            <person name="Wen J."/>
            <person name="Xie X."/>
            <person name="Zody M.C."/>
            <person name="Baldwin J."/>
            <person name="Bloom T."/>
            <person name="Chin C.W."/>
            <person name="Heiman D."/>
            <person name="Nicol R."/>
            <person name="Nusbaum C."/>
            <person name="Young S."/>
            <person name="Wilkinson J."/>
            <person name="Worley K.C."/>
            <person name="Kovar C.L."/>
            <person name="Muzny D.M."/>
            <person name="Gibbs R.A."/>
            <person name="Cree A."/>
            <person name="Dihn H.H."/>
            <person name="Fowler G."/>
            <person name="Jhangiani S."/>
            <person name="Joshi V."/>
            <person name="Lee S."/>
            <person name="Lewis L.R."/>
            <person name="Nazareth L.V."/>
            <person name="Okwuonu G."/>
            <person name="Santibanez J."/>
            <person name="Warren W.C."/>
            <person name="Mardis E.R."/>
            <person name="Weinstock G.M."/>
            <person name="Wilson R.K."/>
            <person name="Delehaunty K."/>
            <person name="Dooling D."/>
            <person name="Fronik C."/>
            <person name="Fulton L."/>
            <person name="Fulton B."/>
            <person name="Graves T."/>
            <person name="Minx P."/>
            <person name="Sodergren E."/>
            <person name="Birney E."/>
            <person name="Margulies E.H."/>
            <person name="Herrero J."/>
            <person name="Green E.D."/>
            <person name="Haussler D."/>
            <person name="Siepel A."/>
            <person name="Goldman N."/>
            <person name="Pollard K.S."/>
            <person name="Pedersen J.S."/>
            <person name="Lander E.S."/>
            <person name="Kellis M."/>
        </authorList>
    </citation>
    <scope>NUCLEOTIDE SEQUENCE [LARGE SCALE GENOMIC DNA]</scope>
    <source>
        <strain>Thorbecke</strain>
    </source>
</reference>
<reference evidence="18 19" key="2">
    <citation type="journal article" date="2013" name="Nature">
        <title>The initiation of mammalian protein synthesis and mRNA scanning mechanism.</title>
        <authorList>
            <person name="Lomakin I.B."/>
            <person name="Steitz T.A."/>
        </authorList>
    </citation>
    <scope>X-RAY CRYSTALLOGRAPHY (7.01 ANGSTROMS) OF 40S RIBOSOME</scope>
    <scope>FUNCTION</scope>
    <scope>SUBUNIT</scope>
    <scope>SUBCELLULAR LOCATION</scope>
</reference>
<reference evidence="16 17" key="3">
    <citation type="journal article" date="2015" name="Mol. Cell">
        <title>Cryo-EM of ribosomal 80S complexes with termination factors reveals the translocated cricket paralysis virus IRES.</title>
        <authorList>
            <person name="Muhs M."/>
            <person name="Hilal T."/>
            <person name="Mielke T."/>
            <person name="Skabkin M.A."/>
            <person name="Sanbonmatsu K.Y."/>
            <person name="Pestova T.V."/>
            <person name="Spahn C.M."/>
        </authorList>
    </citation>
    <scope>STRUCTURE BY ELECTRON MICROSCOPY (9.00 ANGSTROMS) OF RIBOSOME</scope>
    <scope>FUNCTION</scope>
    <scope>SUBUNIT</scope>
    <scope>SUBCELLULAR LOCATION</scope>
</reference>
<reference evidence="20" key="4">
    <citation type="journal article" date="2018" name="Elife">
        <title>Dual tRNA mimicry in the Cricket paralysis virus IRES uncovers an unexpected similarity with the Hepatitis C Virus IRES.</title>
        <authorList>
            <person name="Pisareva V.P."/>
            <person name="Pisarev A.V."/>
            <person name="Fernandez I.S."/>
        </authorList>
    </citation>
    <scope>STRUCTURE BY ELECTRON MICROSCOPY (3.20 ANGSTROMS) OF RIBOSOME</scope>
    <scope>SUBCELLULAR LOCATION</scope>
    <scope>SUBUNIT</scope>
</reference>
<reference evidence="21 22" key="5">
    <citation type="journal article" date="2019" name="EMBO J.">
        <title>The Israeli acute paralysis virus IRES captures host ribosomes by mimicking a ribosomal state with hybrid tRNAs.</title>
        <authorList>
            <person name="Acosta-Reyes F."/>
            <person name="Neupane R."/>
            <person name="Frank J."/>
            <person name="Fernandez I.S."/>
        </authorList>
    </citation>
    <scope>STRUCTURE BY ELECTRON MICROSCOPY (3.10 ANGSTROMS) OF RIBOSOME</scope>
    <scope>SUBUNIT</scope>
    <scope>SUBCELLULAR LOCATION</scope>
</reference>
<reference evidence="25 26" key="6">
    <citation type="journal article" date="2020" name="Cell Rep.">
        <title>The Halastavi arva virus intergenic region IRES promotes translation by the simplest possible initiation mechanism.</title>
        <authorList>
            <person name="Abaeva I.S."/>
            <person name="Vicens Q."/>
            <person name="Bochler A."/>
            <person name="Soufari H."/>
            <person name="Simonetti A."/>
            <person name="Pestova T.V."/>
            <person name="Hashem Y."/>
            <person name="Hellen C.U.T."/>
        </authorList>
    </citation>
    <scope>STRUCTURE BY ELECTRON MICROSCOPY (3.49 ANGSTROMS) OF RIBOSOME</scope>
    <scope>SUBCELLULAR LOCATION</scope>
    <scope>SUBUNIT</scope>
</reference>
<reference evidence="23 24" key="7">
    <citation type="journal article" date="2020" name="Elife">
        <title>A complex IRES at the 5'-UTR of a viral mRNA assembles a functional 48S complex via an uAUG intermediate.</title>
        <authorList>
            <person name="Neupane R."/>
            <person name="Pisareva V.P."/>
            <person name="Rodriguez C.F."/>
            <person name="Pisarev A.V."/>
            <person name="Fernandez I.S."/>
        </authorList>
    </citation>
    <scope>STRUCTURE BY ELECTRON MICROSCOPY (3.00 ANGSTROMS) OF RIBOSOME</scope>
    <scope>SUBUNIT</scope>
    <scope>SUBCELLULAR LOCATION</scope>
</reference>
<reference evidence="28 29" key="8">
    <citation type="journal article" date="2022" name="EMBO J.">
        <title>Molecular architecture of 40S translation initiation complexes on the hepatitis C virus IRES.</title>
        <authorList>
            <person name="Brown Z.P."/>
            <person name="Abaeva I.S."/>
            <person name="De S."/>
            <person name="Hellen C.U.T."/>
            <person name="Pestova T.V."/>
            <person name="Frank J."/>
        </authorList>
    </citation>
    <scope>STRUCTURE BY ELECTRON MICROSCOPY (3.50 ANGSTROMS) OF RIBOSOME</scope>
    <scope>SUBCELLULAR LOCATION</scope>
    <scope>SUBUNIT</scope>
</reference>
<reference evidence="30 31" key="9">
    <citation type="journal article" date="2022" name="Mol. Cell">
        <title>Direct epitranscriptomic regulation of mammalian translation initiation through N4-acetylcytidine.</title>
        <authorList>
            <person name="Arango D."/>
            <person name="Sturgill D."/>
            <person name="Yang R."/>
            <person name="Kanai T."/>
            <person name="Bauer P."/>
            <person name="Roy J."/>
            <person name="Wang Z."/>
            <person name="Hosogane M."/>
            <person name="Schiffers S."/>
            <person name="Oberdoerffer S."/>
        </authorList>
    </citation>
    <scope>STRUCTURE BY ELECTRON MICROSCOPY (2.80 ANGSTROMS) OF RIBOSOME</scope>
    <scope>SUBCELLULAR LOCATION</scope>
    <scope>SUBUNIT</scope>
</reference>
<reference evidence="32 33" key="10">
    <citation type="journal article" date="2022" name="Science">
        <title>Structure of the mammalian ribosome as it decodes the selenocysteine UGA codon.</title>
        <authorList>
            <person name="Hilal T."/>
            <person name="Killam B.Y."/>
            <person name="Grozdanovic M."/>
            <person name="Dobosz-Bartoszek M."/>
            <person name="Loerke J."/>
            <person name="Buerger J."/>
            <person name="Mielke T."/>
            <person name="Copeland P.R."/>
            <person name="Simonovic M."/>
            <person name="Spahn C.M.T."/>
        </authorList>
    </citation>
    <scope>STRUCTURE BY ELECTRON MICROSCOPY (2.80 ANGSTROMS) OF RIBOSOME</scope>
    <scope>SUBCELLULAR LOCATION</scope>
    <scope>SUBUNIT</scope>
</reference>
<reference evidence="27" key="11">
    <citation type="journal article" date="2023" name="Nature">
        <title>A molecular network of conserved factors keeps ribosomes dormant in the egg.</title>
        <authorList>
            <person name="Leesch F."/>
            <person name="Lorenzo-Orts L."/>
            <person name="Pribitzer C."/>
            <person name="Grishkovskaya I."/>
            <person name="Roehsner J."/>
            <person name="Chugunova A."/>
            <person name="Matzinger M."/>
            <person name="Roitinger E."/>
            <person name="Belacic K."/>
            <person name="Kandolf S."/>
            <person name="Lin T.Y."/>
            <person name="Mechtler K."/>
            <person name="Meinhart A."/>
            <person name="Haselbach D."/>
            <person name="Pauli A."/>
        </authorList>
    </citation>
    <scope>STRUCTURE BY ELECTRON MICROSCOPY (2.30 ANGSTROMS) OF RIBOSOME</scope>
    <scope>SUBCELLULAR LOCATION</scope>
    <scope>SUBUNIT</scope>
</reference>
<organism>
    <name type="scientific">Oryctolagus cuniculus</name>
    <name type="common">Rabbit</name>
    <dbReference type="NCBI Taxonomy" id="9986"/>
    <lineage>
        <taxon>Eukaryota</taxon>
        <taxon>Metazoa</taxon>
        <taxon>Chordata</taxon>
        <taxon>Craniata</taxon>
        <taxon>Vertebrata</taxon>
        <taxon>Euteleostomi</taxon>
        <taxon>Mammalia</taxon>
        <taxon>Eutheria</taxon>
        <taxon>Euarchontoglires</taxon>
        <taxon>Glires</taxon>
        <taxon>Lagomorpha</taxon>
        <taxon>Leporidae</taxon>
        <taxon>Oryctolagus</taxon>
    </lineage>
</organism>
<sequence length="295" mass="32898">MSGALDVLQMKEEDVLKFLAAGTHLGGTNLDFQMEQYIYKRKSDGIYIINLKRTWEKLLLAARAIVAIENPADVSVISSRNTGQRAVLKFAAATGATPIAGRFTPGTFTNQIQAAFREPRLLVVTDPRADHQPLTEASYVNLPTIALCNTDSPLRYVDIAIPCNNKGAHSVGLMWWMLAREVLRMRGTISREHPWEVMPDLYFYRDPEEIEKEEQAAAEKAVTKEEFQGEWTAPAPEFTATQPEVADWSEGVQVPSVPIQQFPTEDWSAQPATEDWSAAPTAQATEWVGTTTEWS</sequence>
<keyword id="KW-0002">3D-structure</keyword>
<keyword id="KW-0007">Acetylation</keyword>
<keyword id="KW-1003">Cell membrane</keyword>
<keyword id="KW-0963">Cytoplasm</keyword>
<keyword id="KW-1183">Host cell receptor for virus entry</keyword>
<keyword id="KW-0945">Host-virus interaction</keyword>
<keyword id="KW-1017">Isopeptide bond</keyword>
<keyword id="KW-0472">Membrane</keyword>
<keyword id="KW-0539">Nucleus</keyword>
<keyword id="KW-0597">Phosphoprotein</keyword>
<keyword id="KW-0675">Receptor</keyword>
<keyword id="KW-1185">Reference proteome</keyword>
<keyword id="KW-0677">Repeat</keyword>
<keyword id="KW-0687">Ribonucleoprotein</keyword>
<keyword id="KW-0689">Ribosomal protein</keyword>
<keyword id="KW-0832">Ubl conjugation</keyword>
<protein>
    <recommendedName>
        <fullName evidence="3">Small ribosomal subunit protein uS2</fullName>
    </recommendedName>
    <alternativeName>
        <fullName evidence="3">37 kDa laminin receptor precursor</fullName>
        <shortName evidence="3">37LRP</shortName>
    </alternativeName>
    <alternativeName>
        <fullName evidence="3">37/67 kDa laminin receptor</fullName>
        <shortName evidence="3">LRP/LR</shortName>
    </alternativeName>
    <alternativeName>
        <fullName evidence="3">67 kDa laminin receptor</fullName>
        <shortName evidence="3">67LR</shortName>
    </alternativeName>
    <alternativeName>
        <fullName evidence="3">Laminin receptor 1</fullName>
        <shortName evidence="3">LamR</shortName>
    </alternativeName>
    <alternativeName>
        <fullName evidence="3">Laminin-binding protein precursor p40</fullName>
        <shortName evidence="3">LBP/p40</shortName>
    </alternativeName>
</protein>
<comment type="function">
    <text evidence="3 5 6">Required for the assembly and/or stability of the 40S ribosomal subunit (PubMed:23873042, PubMed:25601755). Required for the processing of the 20S rRNA-precursor to mature 18S rRNA in a late step of the maturation of 40S ribosomal subunits (PubMed:23873042, PubMed:25601755). Also functions as a cell surface receptor for laminin (By similarity). Plays a role in cell adhesion to the basement membrane and in the consequent activation of signaling transduction pathways (By similarity). May play a role in cell fate determination and tissue morphogenesis (By similarity). Also acts as a receptor for several other ligands, including the pathogenic prion protein, viruses, and bacteria. Acts as a PPP1R16B-dependent substrate of PPP1CA (By similarity).</text>
</comment>
<comment type="subunit">
    <text evidence="3 5 6 7 8 9 10 11 12 13 14">Monomer (37LRP) and homodimer (67LR) (By similarity). Component of the small ribosomal subunit (PubMed:23873042, PubMed:25601755, PubMed:29856316, PubMed:31609474, PubMed:32286223, PubMed:33296660, PubMed:35679869, PubMed:35709277, PubMed:35822879, PubMed:36653451). Mature ribosomes consist of a small (40S) and a large (60S) subunit (PubMed:23873042, PubMed:25601755, PubMed:29856316, PubMed:31609474, PubMed:32286223, PubMed:33296660, PubMed:35679869, PubMed:35709277, PubMed:35822879, PubMed:36653451). The 40S subunit contains about 33 different proteins and 1 molecule of RNA (18S) (PubMed:23873042, PubMed:25601755, PubMed:29856316, PubMed:31609474, PubMed:32286223, PubMed:33296660, PubMed:35679869, PubMed:35709277, PubMed:35822879, PubMed:36653451). The 60S subunit contains about 49 different proteins and 3 molecules of RNA (28S, 5.8S and 5S) (PubMed:23873042, PubMed:25601755, PubMed:29856316, PubMed:31609474, PubMed:32286223, PubMed:33296660, PubMed:35679869, PubMed:35709277, PubMed:35822879, PubMed:36653451). Interacts with RPS21 (PubMed:23873042, PubMed:25601755, PubMed:29856316, PubMed:31609474, PubMed:32286223, PubMed:33296660, PubMed:35679869, PubMed:35709277, PubMed:35822879, PubMed:36653451). Interacts with several laminins including at least LAMB1 (By similarity). Interacts with MDK (By similarity). The mature dimeric form interacts with PPP1R16B (via its fourth ankyrin repeat) (By similarity). Interacts with PPP1CA only in the presence of PPP1R16B (By similarity).</text>
</comment>
<comment type="subcellular location">
    <subcellularLocation>
        <location evidence="3">Cell membrane</location>
    </subcellularLocation>
    <subcellularLocation>
        <location evidence="5 6 7 8 9 10 11 12 13 14">Cytoplasm</location>
    </subcellularLocation>
    <subcellularLocation>
        <location evidence="3">Nucleus</location>
    </subcellularLocation>
    <text evidence="3">67LR is found at the surface of the plasma membrane, with its C-terminal laminin-binding domain accessible to extracellular ligands. 37LRP is found at the cell surface, in the cytoplasm and in the nucleus. Co-localizes with PPP1R16B in the cell membrane.</text>
</comment>
<comment type="PTM">
    <text evidence="3">Acylated. Acylation may be a prerequisite for conversion of the monomeric 37 kDa laminin receptor precursor (37LRP) to the mature dimeric 67 kDa laminin receptor (67LR), and may provide a mechanism for membrane association.</text>
</comment>
<comment type="PTM">
    <text evidence="3">Cleaved by stromelysin-3 (ST3) at the cell surface. Cleavage by stromelysin-3 may be a mechanism to alter cell-extracellular matrix interactions.</text>
</comment>
<comment type="miscellaneous">
    <text evidence="3">This protein appears to have acquired a second function as a laminin receptor specifically in the vertebrate lineage.</text>
</comment>
<comment type="similarity">
    <text evidence="15">Belongs to the universal ribosomal protein uS2 family.</text>
</comment>
<feature type="initiator methionine" description="Removed" evidence="3">
    <location>
        <position position="1"/>
    </location>
</feature>
<feature type="chain" id="PRO_0000460088" description="Small ribosomal subunit protein uS2">
    <location>
        <begin position="2"/>
        <end position="295"/>
    </location>
</feature>
<feature type="repeat" description="[DE]-W-[ST] 1" evidence="3">
    <location>
        <begin position="230"/>
        <end position="232"/>
    </location>
</feature>
<feature type="repeat" description="[DE]-W-[ST] 2" evidence="3">
    <location>
        <begin position="247"/>
        <end position="249"/>
    </location>
</feature>
<feature type="repeat" description="[DE]-W-[ST] 3" evidence="3">
    <location>
        <begin position="266"/>
        <end position="268"/>
    </location>
</feature>
<feature type="repeat" description="[DE]-W-[ST] 4" evidence="3">
    <location>
        <begin position="275"/>
        <end position="277"/>
    </location>
</feature>
<feature type="repeat" description="[DE]-W-[ST] 5" evidence="3">
    <location>
        <begin position="293"/>
        <end position="295"/>
    </location>
</feature>
<feature type="region of interest" description="Interaction with PPP1R16B" evidence="3">
    <location>
        <begin position="54"/>
        <end position="113"/>
    </location>
</feature>
<feature type="region of interest" description="Laminin-binding" evidence="3">
    <location>
        <begin position="161"/>
        <end position="180"/>
    </location>
</feature>
<feature type="region of interest" description="Laminin-binding" evidence="3">
    <location>
        <begin position="205"/>
        <end position="229"/>
    </location>
</feature>
<feature type="region of interest" description="Laminin-binding" evidence="3">
    <location>
        <begin position="242"/>
        <end position="295"/>
    </location>
</feature>
<feature type="region of interest" description="Disordered" evidence="4">
    <location>
        <begin position="266"/>
        <end position="295"/>
    </location>
</feature>
<feature type="compositionally biased region" description="Polar residues" evidence="4">
    <location>
        <begin position="280"/>
        <end position="295"/>
    </location>
</feature>
<feature type="site" description="Cleavage; by ST3; site 1" evidence="3">
    <location>
        <begin position="115"/>
        <end position="116"/>
    </location>
</feature>
<feature type="site" description="Cleavage; by ST3; site 2" evidence="3">
    <location>
        <begin position="133"/>
        <end position="134"/>
    </location>
</feature>
<feature type="modified residue" description="N-acetylserine" evidence="3">
    <location>
        <position position="2"/>
    </location>
</feature>
<feature type="modified residue" description="Phosphoserine" evidence="1">
    <location>
        <position position="43"/>
    </location>
</feature>
<feature type="modified residue" description="N6-acetyllysine" evidence="1">
    <location>
        <position position="52"/>
    </location>
</feature>
<feature type="modified residue" description="N6-acetyllysine; alternate" evidence="2">
    <location>
        <position position="89"/>
    </location>
</feature>
<feature type="modified residue" description="Phosphothreonine" evidence="1">
    <location>
        <position position="97"/>
    </location>
</feature>
<feature type="cross-link" description="Glycyl lysine isopeptide (Lys-Gly) (interchain with G-Cter in SUMO2); alternate" evidence="1">
    <location>
        <position position="89"/>
    </location>
</feature>
<feature type="helix" evidence="36">
    <location>
        <begin position="6"/>
        <end position="8"/>
    </location>
</feature>
<feature type="helix" evidence="36">
    <location>
        <begin position="12"/>
        <end position="20"/>
    </location>
</feature>
<feature type="turn" evidence="36">
    <location>
        <begin position="21"/>
        <end position="24"/>
    </location>
</feature>
<feature type="helix" evidence="36">
    <location>
        <begin position="33"/>
        <end position="37"/>
    </location>
</feature>
<feature type="strand" evidence="36">
    <location>
        <begin position="38"/>
        <end position="41"/>
    </location>
</feature>
<feature type="strand" evidence="34">
    <location>
        <begin position="43"/>
        <end position="45"/>
    </location>
</feature>
<feature type="strand" evidence="36">
    <location>
        <begin position="47"/>
        <end position="49"/>
    </location>
</feature>
<feature type="helix" evidence="36">
    <location>
        <begin position="51"/>
        <end position="66"/>
    </location>
</feature>
<feature type="strand" evidence="37">
    <location>
        <begin position="68"/>
        <end position="70"/>
    </location>
</feature>
<feature type="helix" evidence="36">
    <location>
        <begin position="71"/>
        <end position="73"/>
    </location>
</feature>
<feature type="strand" evidence="36">
    <location>
        <begin position="74"/>
        <end position="78"/>
    </location>
</feature>
<feature type="turn" evidence="36">
    <location>
        <begin position="81"/>
        <end position="83"/>
    </location>
</feature>
<feature type="helix" evidence="36">
    <location>
        <begin position="84"/>
        <end position="94"/>
    </location>
</feature>
<feature type="strand" evidence="36">
    <location>
        <begin position="97"/>
        <end position="101"/>
    </location>
</feature>
<feature type="turn" evidence="36">
    <location>
        <begin position="105"/>
        <end position="109"/>
    </location>
</feature>
<feature type="strand" evidence="36">
    <location>
        <begin position="113"/>
        <end position="115"/>
    </location>
</feature>
<feature type="strand" evidence="36">
    <location>
        <begin position="120"/>
        <end position="125"/>
    </location>
</feature>
<feature type="turn" evidence="36">
    <location>
        <begin position="127"/>
        <end position="130"/>
    </location>
</feature>
<feature type="helix" evidence="36">
    <location>
        <begin position="131"/>
        <end position="136"/>
    </location>
</feature>
<feature type="turn" evidence="36">
    <location>
        <begin position="137"/>
        <end position="141"/>
    </location>
</feature>
<feature type="strand" evidence="36">
    <location>
        <begin position="144"/>
        <end position="148"/>
    </location>
</feature>
<feature type="strand" evidence="35">
    <location>
        <begin position="150"/>
        <end position="152"/>
    </location>
</feature>
<feature type="strand" evidence="36">
    <location>
        <begin position="158"/>
        <end position="163"/>
    </location>
</feature>
<feature type="helix" evidence="36">
    <location>
        <begin position="168"/>
        <end position="185"/>
    </location>
</feature>
<feature type="strand" evidence="34">
    <location>
        <begin position="186"/>
        <end position="188"/>
    </location>
</feature>
<feature type="strand" evidence="36">
    <location>
        <begin position="191"/>
        <end position="193"/>
    </location>
</feature>
<feature type="helix" evidence="36">
    <location>
        <begin position="199"/>
        <end position="202"/>
    </location>
</feature>
<feature type="helix" evidence="36">
    <location>
        <begin position="207"/>
        <end position="214"/>
    </location>
</feature>